<evidence type="ECO:0000255" key="1">
    <source>
        <dbReference type="HAMAP-Rule" id="MF_00097"/>
    </source>
</evidence>
<organism>
    <name type="scientific">Aquifex aeolicus (strain VF5)</name>
    <dbReference type="NCBI Taxonomy" id="224324"/>
    <lineage>
        <taxon>Bacteria</taxon>
        <taxon>Pseudomonadati</taxon>
        <taxon>Aquificota</taxon>
        <taxon>Aquificia</taxon>
        <taxon>Aquificales</taxon>
        <taxon>Aquificaceae</taxon>
        <taxon>Aquifex</taxon>
    </lineage>
</organism>
<feature type="chain" id="PRO_0000156990" description="Thiamine-phosphate synthase 1">
    <location>
        <begin position="1"/>
        <end position="215"/>
    </location>
</feature>
<feature type="binding site" evidence="1">
    <location>
        <begin position="35"/>
        <end position="39"/>
    </location>
    <ligand>
        <name>4-amino-2-methyl-5-(diphosphooxymethyl)pyrimidine</name>
        <dbReference type="ChEBI" id="CHEBI:57841"/>
    </ligand>
</feature>
<feature type="binding site" evidence="1">
    <location>
        <position position="67"/>
    </location>
    <ligand>
        <name>4-amino-2-methyl-5-(diphosphooxymethyl)pyrimidine</name>
        <dbReference type="ChEBI" id="CHEBI:57841"/>
    </ligand>
</feature>
<feature type="binding site" evidence="1">
    <location>
        <position position="68"/>
    </location>
    <ligand>
        <name>Mg(2+)</name>
        <dbReference type="ChEBI" id="CHEBI:18420"/>
    </ligand>
</feature>
<feature type="binding site" evidence="1">
    <location>
        <position position="87"/>
    </location>
    <ligand>
        <name>Mg(2+)</name>
        <dbReference type="ChEBI" id="CHEBI:18420"/>
    </ligand>
</feature>
<feature type="binding site" evidence="1">
    <location>
        <position position="106"/>
    </location>
    <ligand>
        <name>4-amino-2-methyl-5-(diphosphooxymethyl)pyrimidine</name>
        <dbReference type="ChEBI" id="CHEBI:57841"/>
    </ligand>
</feature>
<feature type="binding site" evidence="1">
    <location>
        <begin position="132"/>
        <end position="134"/>
    </location>
    <ligand>
        <name>2-[(2R,5Z)-2-carboxy-4-methylthiazol-5(2H)-ylidene]ethyl phosphate</name>
        <dbReference type="ChEBI" id="CHEBI:62899"/>
    </ligand>
</feature>
<feature type="binding site" evidence="1">
    <location>
        <position position="135"/>
    </location>
    <ligand>
        <name>4-amino-2-methyl-5-(diphosphooxymethyl)pyrimidine</name>
        <dbReference type="ChEBI" id="CHEBI:57841"/>
    </ligand>
</feature>
<feature type="binding site" evidence="1">
    <location>
        <position position="162"/>
    </location>
    <ligand>
        <name>2-[(2R,5Z)-2-carboxy-4-methylthiazol-5(2H)-ylidene]ethyl phosphate</name>
        <dbReference type="ChEBI" id="CHEBI:62899"/>
    </ligand>
</feature>
<accession>O66833</accession>
<proteinExistence type="inferred from homology"/>
<comment type="function">
    <text evidence="1">Condenses 4-methyl-5-(beta-hydroxyethyl)thiazole monophosphate (THZ-P) and 2-methyl-4-amino-5-hydroxymethyl pyrimidine pyrophosphate (HMP-PP) to form thiamine monophosphate (TMP).</text>
</comment>
<comment type="catalytic activity">
    <reaction evidence="1">
        <text>2-[(2R,5Z)-2-carboxy-4-methylthiazol-5(2H)-ylidene]ethyl phosphate + 4-amino-2-methyl-5-(diphosphooxymethyl)pyrimidine + 2 H(+) = thiamine phosphate + CO2 + diphosphate</text>
        <dbReference type="Rhea" id="RHEA:47844"/>
        <dbReference type="ChEBI" id="CHEBI:15378"/>
        <dbReference type="ChEBI" id="CHEBI:16526"/>
        <dbReference type="ChEBI" id="CHEBI:33019"/>
        <dbReference type="ChEBI" id="CHEBI:37575"/>
        <dbReference type="ChEBI" id="CHEBI:57841"/>
        <dbReference type="ChEBI" id="CHEBI:62899"/>
        <dbReference type="EC" id="2.5.1.3"/>
    </reaction>
</comment>
<comment type="catalytic activity">
    <reaction evidence="1">
        <text>2-(2-carboxy-4-methylthiazol-5-yl)ethyl phosphate + 4-amino-2-methyl-5-(diphosphooxymethyl)pyrimidine + 2 H(+) = thiamine phosphate + CO2 + diphosphate</text>
        <dbReference type="Rhea" id="RHEA:47848"/>
        <dbReference type="ChEBI" id="CHEBI:15378"/>
        <dbReference type="ChEBI" id="CHEBI:16526"/>
        <dbReference type="ChEBI" id="CHEBI:33019"/>
        <dbReference type="ChEBI" id="CHEBI:37575"/>
        <dbReference type="ChEBI" id="CHEBI:57841"/>
        <dbReference type="ChEBI" id="CHEBI:62890"/>
        <dbReference type="EC" id="2.5.1.3"/>
    </reaction>
</comment>
<comment type="catalytic activity">
    <reaction evidence="1">
        <text>4-methyl-5-(2-phosphooxyethyl)-thiazole + 4-amino-2-methyl-5-(diphosphooxymethyl)pyrimidine + H(+) = thiamine phosphate + diphosphate</text>
        <dbReference type="Rhea" id="RHEA:22328"/>
        <dbReference type="ChEBI" id="CHEBI:15378"/>
        <dbReference type="ChEBI" id="CHEBI:33019"/>
        <dbReference type="ChEBI" id="CHEBI:37575"/>
        <dbReference type="ChEBI" id="CHEBI:57841"/>
        <dbReference type="ChEBI" id="CHEBI:58296"/>
        <dbReference type="EC" id="2.5.1.3"/>
    </reaction>
</comment>
<comment type="cofactor">
    <cofactor evidence="1">
        <name>Mg(2+)</name>
        <dbReference type="ChEBI" id="CHEBI:18420"/>
    </cofactor>
    <text evidence="1">Binds 1 Mg(2+) ion per subunit.</text>
</comment>
<comment type="pathway">
    <text evidence="1">Cofactor biosynthesis; thiamine diphosphate biosynthesis; thiamine phosphate from 4-amino-2-methyl-5-diphosphomethylpyrimidine and 4-methyl-5-(2-phosphoethyl)-thiazole: step 1/1.</text>
</comment>
<comment type="similarity">
    <text evidence="1">Belongs to the thiamine-phosphate synthase family.</text>
</comment>
<reference key="1">
    <citation type="journal article" date="1998" name="Nature">
        <title>The complete genome of the hyperthermophilic bacterium Aquifex aeolicus.</title>
        <authorList>
            <person name="Deckert G."/>
            <person name="Warren P.V."/>
            <person name="Gaasterland T."/>
            <person name="Young W.G."/>
            <person name="Lenox A.L."/>
            <person name="Graham D.E."/>
            <person name="Overbeek R."/>
            <person name="Snead M.A."/>
            <person name="Keller M."/>
            <person name="Aujay M."/>
            <person name="Huber R."/>
            <person name="Feldman R.A."/>
            <person name="Short J.M."/>
            <person name="Olsen G.J."/>
            <person name="Swanson R.V."/>
        </authorList>
    </citation>
    <scope>NUCLEOTIDE SEQUENCE [LARGE SCALE GENOMIC DNA]</scope>
    <source>
        <strain>VF5</strain>
    </source>
</reference>
<sequence>MNLTIYLITDDKYFKDRDLFNTIEQALQGGVTAVQYRFENKTTRQMYEELVKLRELTRKYNADLVVNDRVDLALAVEADGVHIGKDDLPPEVVRKIVGDKMYIGYTANSLEEVKRAQELPVDYIGFGSIYHTSTKENYKLVGVEALKEAVKISQKPIVCIGGIMPYRVPEVVRAGCRNIAVSSGILGFADVKKAAESIKRAYQETLRMLMLMGKV</sequence>
<gene>
    <name evidence="1" type="primary">thiE1</name>
    <name type="ordered locus">aq_558</name>
</gene>
<protein>
    <recommendedName>
        <fullName evidence="1">Thiamine-phosphate synthase 1</fullName>
        <shortName evidence="1">TP synthase 1</shortName>
        <shortName evidence="1">TPS 1</shortName>
        <ecNumber evidence="1">2.5.1.3</ecNumber>
    </recommendedName>
    <alternativeName>
        <fullName evidence="1">Thiamine-phosphate pyrophosphorylase 1</fullName>
        <shortName evidence="1">TMP pyrophosphorylase 1</shortName>
        <shortName evidence="1">TMP-PPase 1</shortName>
    </alternativeName>
</protein>
<dbReference type="EC" id="2.5.1.3" evidence="1"/>
<dbReference type="EMBL" id="AE000657">
    <property type="protein sequence ID" value="AAC06786.1"/>
    <property type="molecule type" value="Genomic_DNA"/>
</dbReference>
<dbReference type="PIR" id="E70350">
    <property type="entry name" value="E70350"/>
</dbReference>
<dbReference type="RefSeq" id="NP_213393.1">
    <property type="nucleotide sequence ID" value="NC_000918.1"/>
</dbReference>
<dbReference type="RefSeq" id="WP_010880331.1">
    <property type="nucleotide sequence ID" value="NC_000918.1"/>
</dbReference>
<dbReference type="SMR" id="O66833"/>
<dbReference type="FunCoup" id="O66833">
    <property type="interactions" value="366"/>
</dbReference>
<dbReference type="STRING" id="224324.aq_558"/>
<dbReference type="EnsemblBacteria" id="AAC06786">
    <property type="protein sequence ID" value="AAC06786"/>
    <property type="gene ID" value="aq_558"/>
</dbReference>
<dbReference type="KEGG" id="aae:aq_558"/>
<dbReference type="PATRIC" id="fig|224324.8.peg.459"/>
<dbReference type="eggNOG" id="COG0352">
    <property type="taxonomic scope" value="Bacteria"/>
</dbReference>
<dbReference type="HOGENOM" id="CLU_018272_3_2_0"/>
<dbReference type="InParanoid" id="O66833"/>
<dbReference type="OrthoDB" id="9812206at2"/>
<dbReference type="UniPathway" id="UPA00060">
    <property type="reaction ID" value="UER00141"/>
</dbReference>
<dbReference type="Proteomes" id="UP000000798">
    <property type="component" value="Chromosome"/>
</dbReference>
<dbReference type="GO" id="GO:0005737">
    <property type="term" value="C:cytoplasm"/>
    <property type="evidence" value="ECO:0000318"/>
    <property type="project" value="GO_Central"/>
</dbReference>
<dbReference type="GO" id="GO:0000287">
    <property type="term" value="F:magnesium ion binding"/>
    <property type="evidence" value="ECO:0007669"/>
    <property type="project" value="UniProtKB-UniRule"/>
</dbReference>
<dbReference type="GO" id="GO:0004789">
    <property type="term" value="F:thiamine-phosphate diphosphorylase activity"/>
    <property type="evidence" value="ECO:0000318"/>
    <property type="project" value="GO_Central"/>
</dbReference>
<dbReference type="GO" id="GO:0009228">
    <property type="term" value="P:thiamine biosynthetic process"/>
    <property type="evidence" value="ECO:0000318"/>
    <property type="project" value="GO_Central"/>
</dbReference>
<dbReference type="GO" id="GO:0009229">
    <property type="term" value="P:thiamine diphosphate biosynthetic process"/>
    <property type="evidence" value="ECO:0007669"/>
    <property type="project" value="UniProtKB-UniRule"/>
</dbReference>
<dbReference type="CDD" id="cd00564">
    <property type="entry name" value="TMP_TenI"/>
    <property type="match status" value="1"/>
</dbReference>
<dbReference type="FunFam" id="3.20.20.70:FF:000096">
    <property type="entry name" value="Thiamine-phosphate synthase"/>
    <property type="match status" value="1"/>
</dbReference>
<dbReference type="Gene3D" id="3.20.20.70">
    <property type="entry name" value="Aldolase class I"/>
    <property type="match status" value="1"/>
</dbReference>
<dbReference type="HAMAP" id="MF_00097">
    <property type="entry name" value="TMP_synthase"/>
    <property type="match status" value="1"/>
</dbReference>
<dbReference type="InterPro" id="IPR013785">
    <property type="entry name" value="Aldolase_TIM"/>
</dbReference>
<dbReference type="InterPro" id="IPR036206">
    <property type="entry name" value="ThiamineP_synth_sf"/>
</dbReference>
<dbReference type="InterPro" id="IPR022998">
    <property type="entry name" value="ThiamineP_synth_TenI"/>
</dbReference>
<dbReference type="InterPro" id="IPR034291">
    <property type="entry name" value="TMP_synthase"/>
</dbReference>
<dbReference type="NCBIfam" id="TIGR00693">
    <property type="entry name" value="thiE"/>
    <property type="match status" value="1"/>
</dbReference>
<dbReference type="PANTHER" id="PTHR20857:SF23">
    <property type="entry name" value="THIAMINE BIOSYNTHETIC BIFUNCTIONAL ENZYME"/>
    <property type="match status" value="1"/>
</dbReference>
<dbReference type="PANTHER" id="PTHR20857">
    <property type="entry name" value="THIAMINE-PHOSPHATE PYROPHOSPHORYLASE"/>
    <property type="match status" value="1"/>
</dbReference>
<dbReference type="Pfam" id="PF02581">
    <property type="entry name" value="TMP-TENI"/>
    <property type="match status" value="1"/>
</dbReference>
<dbReference type="SUPFAM" id="SSF51391">
    <property type="entry name" value="Thiamin phosphate synthase"/>
    <property type="match status" value="1"/>
</dbReference>
<keyword id="KW-0460">Magnesium</keyword>
<keyword id="KW-0479">Metal-binding</keyword>
<keyword id="KW-1185">Reference proteome</keyword>
<keyword id="KW-0784">Thiamine biosynthesis</keyword>
<keyword id="KW-0808">Transferase</keyword>
<name>THIE1_AQUAE</name>